<evidence type="ECO:0000250" key="1">
    <source>
        <dbReference type="UniProtKB" id="P25052"/>
    </source>
</evidence>
<evidence type="ECO:0000269" key="2">
    <source>
    </source>
</evidence>
<evidence type="ECO:0000303" key="3">
    <source>
    </source>
</evidence>
<evidence type="ECO:0000305" key="4"/>
<evidence type="ECO:0000312" key="5">
    <source>
        <dbReference type="EMBL" id="BAB06398.1"/>
    </source>
</evidence>
<accession>Q9K9G8</accession>
<dbReference type="EC" id="3.5.99.2" evidence="2"/>
<dbReference type="EMBL" id="BA000004">
    <property type="protein sequence ID" value="BAB06398.1"/>
    <property type="molecule type" value="Genomic_DNA"/>
</dbReference>
<dbReference type="PIR" id="G83984">
    <property type="entry name" value="G83984"/>
</dbReference>
<dbReference type="RefSeq" id="WP_010898828.1">
    <property type="nucleotide sequence ID" value="NC_002570.2"/>
</dbReference>
<dbReference type="SMR" id="Q9K9G8"/>
<dbReference type="STRING" id="272558.gene:10728577"/>
<dbReference type="KEGG" id="bha:BH2679"/>
<dbReference type="eggNOG" id="COG0819">
    <property type="taxonomic scope" value="Bacteria"/>
</dbReference>
<dbReference type="HOGENOM" id="CLU_077537_3_0_9"/>
<dbReference type="OrthoDB" id="34166at2"/>
<dbReference type="UniPathway" id="UPA00060"/>
<dbReference type="Proteomes" id="UP000001258">
    <property type="component" value="Chromosome"/>
</dbReference>
<dbReference type="GO" id="GO:0005829">
    <property type="term" value="C:cytosol"/>
    <property type="evidence" value="ECO:0007669"/>
    <property type="project" value="TreeGrafter"/>
</dbReference>
<dbReference type="GO" id="GO:0050334">
    <property type="term" value="F:thiaminase activity"/>
    <property type="evidence" value="ECO:0007669"/>
    <property type="project" value="UniProtKB-EC"/>
</dbReference>
<dbReference type="GO" id="GO:0009228">
    <property type="term" value="P:thiamine biosynthetic process"/>
    <property type="evidence" value="ECO:0007669"/>
    <property type="project" value="UniProtKB-KW"/>
</dbReference>
<dbReference type="GO" id="GO:0009229">
    <property type="term" value="P:thiamine diphosphate biosynthetic process"/>
    <property type="evidence" value="ECO:0007669"/>
    <property type="project" value="UniProtKB-UniPathway"/>
</dbReference>
<dbReference type="CDD" id="cd19366">
    <property type="entry name" value="TenA_C_BhTenA-like"/>
    <property type="match status" value="1"/>
</dbReference>
<dbReference type="Gene3D" id="1.20.910.10">
    <property type="entry name" value="Heme oxygenase-like"/>
    <property type="match status" value="1"/>
</dbReference>
<dbReference type="InterPro" id="IPR016084">
    <property type="entry name" value="Haem_Oase-like_multi-hlx"/>
</dbReference>
<dbReference type="InterPro" id="IPR026285">
    <property type="entry name" value="TenA_E"/>
</dbReference>
<dbReference type="InterPro" id="IPR004305">
    <property type="entry name" value="Thiaminase-2/PQQC"/>
</dbReference>
<dbReference type="InterPro" id="IPR027574">
    <property type="entry name" value="Thiaminase_II"/>
</dbReference>
<dbReference type="InterPro" id="IPR050967">
    <property type="entry name" value="Thiamine_Salvage_TenA"/>
</dbReference>
<dbReference type="NCBIfam" id="TIGR04306">
    <property type="entry name" value="salvage_TenA"/>
    <property type="match status" value="1"/>
</dbReference>
<dbReference type="PANTHER" id="PTHR43198">
    <property type="entry name" value="BIFUNCTIONAL TH2 PROTEIN"/>
    <property type="match status" value="1"/>
</dbReference>
<dbReference type="PANTHER" id="PTHR43198:SF2">
    <property type="entry name" value="SI:CH1073-67J19.1-RELATED"/>
    <property type="match status" value="1"/>
</dbReference>
<dbReference type="Pfam" id="PF03070">
    <property type="entry name" value="TENA_THI-4"/>
    <property type="match status" value="1"/>
</dbReference>
<dbReference type="PIRSF" id="PIRSF003170">
    <property type="entry name" value="Pet18p"/>
    <property type="match status" value="1"/>
</dbReference>
<dbReference type="SUPFAM" id="SSF48613">
    <property type="entry name" value="Heme oxygenase-like"/>
    <property type="match status" value="1"/>
</dbReference>
<gene>
    <name evidence="3" type="primary">tenA</name>
    <name evidence="5" type="ordered locus">BH2679</name>
</gene>
<feature type="chain" id="PRO_0000431513" description="Aminopyrimidine aminohydrolase">
    <location>
        <begin position="1"/>
        <end position="224"/>
    </location>
</feature>
<feature type="active site" description="Nucleophile" evidence="1">
    <location>
        <position position="135"/>
    </location>
</feature>
<feature type="active site" description="Proton donor" evidence="1">
    <location>
        <position position="207"/>
    </location>
</feature>
<feature type="binding site" evidence="1">
    <location>
        <position position="44"/>
    </location>
    <ligand>
        <name>substrate</name>
    </ligand>
</feature>
<feature type="binding site" evidence="1">
    <location>
        <position position="139"/>
    </location>
    <ligand>
        <name>substrate</name>
    </ligand>
</feature>
<feature type="binding site" evidence="1">
    <location>
        <position position="165"/>
    </location>
    <ligand>
        <name>substrate</name>
    </ligand>
</feature>
<feature type="site" description="Increases nucleophilicity of active site Cys" evidence="1">
    <location>
        <position position="47"/>
    </location>
</feature>
<proteinExistence type="evidence at protein level"/>
<comment type="function">
    <text evidence="1 2">Catalyzes an amino-pyrimidine hydrolysis reaction at the C5' of the pyrimidine moiety of thiamine compounds, a reaction that is part of a thiamine salvage pathway. Thus, catalyzes the conversion of 4-amino-5-aminomethyl-2-methylpyrimidine to 4-amino-5-hydroxymethyl-2-methylpyrimidine (HMP). To a lesser extent, is also able to catalyze the hydrolytic cleavage of thiamine; however, this thiaminase activity is unlikely to be physiologically relevant. Therefore, is involved in the regeneration of the thiamine pyrimidine from thiamine degraded products present in the environment, rather than in thiamine degradation.</text>
</comment>
<comment type="catalytic activity">
    <reaction evidence="2">
        <text>4-amino-5-aminomethyl-2-methylpyrimidine + H2O = 4-amino-5-hydroxymethyl-2-methylpyrimidine + NH4(+)</text>
        <dbReference type="Rhea" id="RHEA:31799"/>
        <dbReference type="ChEBI" id="CHEBI:15377"/>
        <dbReference type="ChEBI" id="CHEBI:16892"/>
        <dbReference type="ChEBI" id="CHEBI:28938"/>
        <dbReference type="ChEBI" id="CHEBI:63416"/>
        <dbReference type="EC" id="3.5.99.2"/>
    </reaction>
</comment>
<comment type="catalytic activity">
    <reaction evidence="1">
        <text>thiamine + H2O = 5-(2-hydroxyethyl)-4-methylthiazole + 4-amino-5-hydroxymethyl-2-methylpyrimidine + H(+)</text>
        <dbReference type="Rhea" id="RHEA:17509"/>
        <dbReference type="ChEBI" id="CHEBI:15377"/>
        <dbReference type="ChEBI" id="CHEBI:15378"/>
        <dbReference type="ChEBI" id="CHEBI:16892"/>
        <dbReference type="ChEBI" id="CHEBI:17957"/>
        <dbReference type="ChEBI" id="CHEBI:18385"/>
        <dbReference type="EC" id="3.5.99.2"/>
    </reaction>
</comment>
<comment type="pathway">
    <text evidence="2">Cofactor biosynthesis; thiamine diphosphate biosynthesis.</text>
</comment>
<comment type="subunit">
    <text evidence="1">Homotetramer.</text>
</comment>
<comment type="similarity">
    <text evidence="4">Belongs to the TenA family.</text>
</comment>
<name>TENA_HALH5</name>
<protein>
    <recommendedName>
        <fullName evidence="3">Aminopyrimidine aminohydrolase</fullName>
        <ecNumber evidence="2">3.5.99.2</ecNumber>
    </recommendedName>
    <alternativeName>
        <fullName evidence="3">4-amino-5-aminomethyl-2-methylpyrimidine hydrolase</fullName>
    </alternativeName>
</protein>
<organism>
    <name type="scientific">Halalkalibacterium halodurans (strain ATCC BAA-125 / DSM 18197 / FERM 7344 / JCM 9153 / C-125)</name>
    <name type="common">Bacillus halodurans</name>
    <dbReference type="NCBI Taxonomy" id="272558"/>
    <lineage>
        <taxon>Bacteria</taxon>
        <taxon>Bacillati</taxon>
        <taxon>Bacillota</taxon>
        <taxon>Bacilli</taxon>
        <taxon>Bacillales</taxon>
        <taxon>Bacillaceae</taxon>
        <taxon>Halalkalibacterium (ex Joshi et al. 2022)</taxon>
    </lineage>
</organism>
<keyword id="KW-0378">Hydrolase</keyword>
<keyword id="KW-1185">Reference proteome</keyword>
<keyword id="KW-0784">Thiamine biosynthesis</keyword>
<reference key="1">
    <citation type="journal article" date="2000" name="Nucleic Acids Res.">
        <title>Complete genome sequence of the alkaliphilic bacterium Bacillus halodurans and genomic sequence comparison with Bacillus subtilis.</title>
        <authorList>
            <person name="Takami H."/>
            <person name="Nakasone K."/>
            <person name="Takaki Y."/>
            <person name="Maeno G."/>
            <person name="Sasaki R."/>
            <person name="Masui N."/>
            <person name="Fuji F."/>
            <person name="Hirama C."/>
            <person name="Nakamura Y."/>
            <person name="Ogasawara N."/>
            <person name="Kuhara S."/>
            <person name="Horikoshi K."/>
        </authorList>
    </citation>
    <scope>NUCLEOTIDE SEQUENCE [LARGE SCALE GENOMIC DNA]</scope>
    <source>
        <strain>ATCC BAA-125 / DSM 18197 / FERM 7344 / JCM 9153 / C-125</strain>
    </source>
</reference>
<reference key="2">
    <citation type="journal article" date="2007" name="Nat. Chem. Biol.">
        <title>A new thiamin salvage pathway.</title>
        <authorList>
            <person name="Jenkins A.H."/>
            <person name="Schyns G."/>
            <person name="Potot S."/>
            <person name="Sun G."/>
            <person name="Begley T.P."/>
        </authorList>
    </citation>
    <scope>FUNCTION</scope>
    <scope>CATALYTIC ACTIVITY</scope>
    <scope>PATHWAY</scope>
</reference>
<sequence length="224" mass="25585">MSFAASLYEKAQPIWEAGYNHPFVQGIGDGSLEKSKFQFFMKQDYLYLIDYARLFALGTLKGNDLQTMSTFSKLLHATLNVEMDLHRAYAKRLGISAEELEAIEPAATTLAYTSYMLNVAQRGSLLDLIAAVLPCTWSYYEIGVKLKGIPGASDHPFYGEWIKLYASDEFKELADWLIQMLDEEAKGLSSKEKAKLETIFLTTSRLENEFWDMAYNERMWNYNG</sequence>